<organism>
    <name type="scientific">Escherichia coli O157:H7</name>
    <dbReference type="NCBI Taxonomy" id="83334"/>
    <lineage>
        <taxon>Bacteria</taxon>
        <taxon>Pseudomonadati</taxon>
        <taxon>Pseudomonadota</taxon>
        <taxon>Gammaproteobacteria</taxon>
        <taxon>Enterobacterales</taxon>
        <taxon>Enterobacteriaceae</taxon>
        <taxon>Escherichia</taxon>
    </lineage>
</organism>
<reference key="1">
    <citation type="journal article" date="2001" name="Nature">
        <title>Genome sequence of enterohaemorrhagic Escherichia coli O157:H7.</title>
        <authorList>
            <person name="Perna N.T."/>
            <person name="Plunkett G. III"/>
            <person name="Burland V."/>
            <person name="Mau B."/>
            <person name="Glasner J.D."/>
            <person name="Rose D.J."/>
            <person name="Mayhew G.F."/>
            <person name="Evans P.S."/>
            <person name="Gregor J."/>
            <person name="Kirkpatrick H.A."/>
            <person name="Posfai G."/>
            <person name="Hackett J."/>
            <person name="Klink S."/>
            <person name="Boutin A."/>
            <person name="Shao Y."/>
            <person name="Miller L."/>
            <person name="Grotbeck E.J."/>
            <person name="Davis N.W."/>
            <person name="Lim A."/>
            <person name="Dimalanta E.T."/>
            <person name="Potamousis K."/>
            <person name="Apodaca J."/>
            <person name="Anantharaman T.S."/>
            <person name="Lin J."/>
            <person name="Yen G."/>
            <person name="Schwartz D.C."/>
            <person name="Welch R.A."/>
            <person name="Blattner F.R."/>
        </authorList>
    </citation>
    <scope>NUCLEOTIDE SEQUENCE [LARGE SCALE GENOMIC DNA]</scope>
    <source>
        <strain>O157:H7 / EDL933 / ATCC 700927 / EHEC</strain>
    </source>
</reference>
<reference key="2">
    <citation type="journal article" date="2001" name="DNA Res.">
        <title>Complete genome sequence of enterohemorrhagic Escherichia coli O157:H7 and genomic comparison with a laboratory strain K-12.</title>
        <authorList>
            <person name="Hayashi T."/>
            <person name="Makino K."/>
            <person name="Ohnishi M."/>
            <person name="Kurokawa K."/>
            <person name="Ishii K."/>
            <person name="Yokoyama K."/>
            <person name="Han C.-G."/>
            <person name="Ohtsubo E."/>
            <person name="Nakayama K."/>
            <person name="Murata T."/>
            <person name="Tanaka M."/>
            <person name="Tobe T."/>
            <person name="Iida T."/>
            <person name="Takami H."/>
            <person name="Honda T."/>
            <person name="Sasakawa C."/>
            <person name="Ogasawara N."/>
            <person name="Yasunaga T."/>
            <person name="Kuhara S."/>
            <person name="Shiba T."/>
            <person name="Hattori M."/>
            <person name="Shinagawa H."/>
        </authorList>
    </citation>
    <scope>NUCLEOTIDE SEQUENCE [LARGE SCALE GENOMIC DNA]</scope>
    <source>
        <strain>O157:H7 / Sakai / RIMD 0509952 / EHEC</strain>
    </source>
</reference>
<sequence>MPQHDQLHRYLFENFAVRGELVTVSETLQQILENHDYPQPVKNVLAELLVATSLLTATLKFDGDITVQLQGDGPMNLAVINGNNNQQMRGVARVQGEIPENADLKTLVGNGYVVITITPSEGERYQGVVGLEGDTLAACLEDYFMRSEQLPTRLFIRTGDVDGKPAAGGMLLQVMPAQNAQQDDFDHLATLTETIKTEELLTLPANEVLWRLYHEEEVTVYDPQDVEFKCTCSRERCADALKTLPDEEVDSILAEDGEIDMHCDYCGNHYLFNAMDIAEIRNNASPADPQVH</sequence>
<gene>
    <name evidence="1" type="primary">hslO</name>
    <name type="ordered locus">Z4755</name>
    <name type="ordered locus">ECs4243</name>
</gene>
<keyword id="KW-0143">Chaperone</keyword>
<keyword id="KW-0963">Cytoplasm</keyword>
<keyword id="KW-1015">Disulfide bond</keyword>
<keyword id="KW-0676">Redox-active center</keyword>
<keyword id="KW-1185">Reference proteome</keyword>
<keyword id="KW-0862">Zinc</keyword>
<name>HSLO_ECO57</name>
<evidence type="ECO:0000255" key="1">
    <source>
        <dbReference type="HAMAP-Rule" id="MF_00117"/>
    </source>
</evidence>
<evidence type="ECO:0000305" key="2"/>
<dbReference type="EMBL" id="AE005174">
    <property type="protein sequence ID" value="AAG58501.1"/>
    <property type="status" value="ALT_INIT"/>
    <property type="molecule type" value="Genomic_DNA"/>
</dbReference>
<dbReference type="EMBL" id="BA000007">
    <property type="protein sequence ID" value="BAB37666.1"/>
    <property type="molecule type" value="Genomic_DNA"/>
</dbReference>
<dbReference type="PIR" id="C91159">
    <property type="entry name" value="C91159"/>
</dbReference>
<dbReference type="RefSeq" id="NP_312270.3">
    <property type="nucleotide sequence ID" value="NC_002695.1"/>
</dbReference>
<dbReference type="RefSeq" id="WP_001135574.1">
    <property type="nucleotide sequence ID" value="NZ_VOAI01000004.1"/>
</dbReference>
<dbReference type="SMR" id="P0A6Y7"/>
<dbReference type="STRING" id="155864.Z4755"/>
<dbReference type="GeneID" id="915901"/>
<dbReference type="GeneID" id="93778597"/>
<dbReference type="KEGG" id="ece:Z4755"/>
<dbReference type="KEGG" id="ecs:ECs_4243"/>
<dbReference type="PATRIC" id="fig|386585.9.peg.4430"/>
<dbReference type="eggNOG" id="COG1281">
    <property type="taxonomic scope" value="Bacteria"/>
</dbReference>
<dbReference type="HOGENOM" id="CLU_054493_0_0_6"/>
<dbReference type="OMA" id="DMQCECC"/>
<dbReference type="Proteomes" id="UP000000558">
    <property type="component" value="Chromosome"/>
</dbReference>
<dbReference type="Proteomes" id="UP000002519">
    <property type="component" value="Chromosome"/>
</dbReference>
<dbReference type="GO" id="GO:0005737">
    <property type="term" value="C:cytoplasm"/>
    <property type="evidence" value="ECO:0007669"/>
    <property type="project" value="UniProtKB-SubCell"/>
</dbReference>
<dbReference type="GO" id="GO:0044183">
    <property type="term" value="F:protein folding chaperone"/>
    <property type="evidence" value="ECO:0007669"/>
    <property type="project" value="TreeGrafter"/>
</dbReference>
<dbReference type="GO" id="GO:0051082">
    <property type="term" value="F:unfolded protein binding"/>
    <property type="evidence" value="ECO:0007669"/>
    <property type="project" value="UniProtKB-UniRule"/>
</dbReference>
<dbReference type="GO" id="GO:0042026">
    <property type="term" value="P:protein refolding"/>
    <property type="evidence" value="ECO:0007669"/>
    <property type="project" value="TreeGrafter"/>
</dbReference>
<dbReference type="CDD" id="cd00498">
    <property type="entry name" value="Hsp33"/>
    <property type="match status" value="1"/>
</dbReference>
<dbReference type="FunFam" id="3.55.30.10:FF:000001">
    <property type="entry name" value="33 kDa chaperonin"/>
    <property type="match status" value="1"/>
</dbReference>
<dbReference type="Gene3D" id="1.10.287.480">
    <property type="entry name" value="helix hairpin bin"/>
    <property type="match status" value="1"/>
</dbReference>
<dbReference type="Gene3D" id="3.55.30.10">
    <property type="entry name" value="Hsp33 domain"/>
    <property type="match status" value="1"/>
</dbReference>
<dbReference type="Gene3D" id="3.90.1280.10">
    <property type="entry name" value="HSP33 redox switch-like"/>
    <property type="match status" value="1"/>
</dbReference>
<dbReference type="HAMAP" id="MF_00117">
    <property type="entry name" value="HslO"/>
    <property type="match status" value="1"/>
</dbReference>
<dbReference type="InterPro" id="IPR000397">
    <property type="entry name" value="Heat_shock_Hsp33"/>
</dbReference>
<dbReference type="InterPro" id="IPR016154">
    <property type="entry name" value="Heat_shock_Hsp33_C"/>
</dbReference>
<dbReference type="InterPro" id="IPR016153">
    <property type="entry name" value="Heat_shock_Hsp33_N"/>
</dbReference>
<dbReference type="InterPro" id="IPR023212">
    <property type="entry name" value="Hsp33_helix_hairpin_bin_dom_sf"/>
</dbReference>
<dbReference type="NCBIfam" id="NF001033">
    <property type="entry name" value="PRK00114.1"/>
    <property type="match status" value="1"/>
</dbReference>
<dbReference type="PANTHER" id="PTHR30111">
    <property type="entry name" value="33 KDA CHAPERONIN"/>
    <property type="match status" value="1"/>
</dbReference>
<dbReference type="PANTHER" id="PTHR30111:SF1">
    <property type="entry name" value="33 KDA CHAPERONIN"/>
    <property type="match status" value="1"/>
</dbReference>
<dbReference type="Pfam" id="PF01430">
    <property type="entry name" value="HSP33"/>
    <property type="match status" value="1"/>
</dbReference>
<dbReference type="PIRSF" id="PIRSF005261">
    <property type="entry name" value="Heat_shock_Hsp33"/>
    <property type="match status" value="1"/>
</dbReference>
<dbReference type="SUPFAM" id="SSF64397">
    <property type="entry name" value="Hsp33 domain"/>
    <property type="match status" value="1"/>
</dbReference>
<dbReference type="SUPFAM" id="SSF118352">
    <property type="entry name" value="HSP33 redox switch-like"/>
    <property type="match status" value="1"/>
</dbReference>
<feature type="chain" id="PRO_0000192176" description="33 kDa chaperonin">
    <location>
        <begin position="1"/>
        <end position="292"/>
    </location>
</feature>
<feature type="disulfide bond" description="Redox-active" evidence="1">
    <location>
        <begin position="230"/>
        <end position="232"/>
    </location>
</feature>
<feature type="disulfide bond" description="Redox-active" evidence="1">
    <location>
        <begin position="263"/>
        <end position="266"/>
    </location>
</feature>
<protein>
    <recommendedName>
        <fullName evidence="1">33 kDa chaperonin</fullName>
    </recommendedName>
    <alternativeName>
        <fullName evidence="1">Heat shock protein 33 homolog</fullName>
        <shortName evidence="1">HSP33</shortName>
    </alternativeName>
</protein>
<comment type="function">
    <text evidence="1">Redox regulated molecular chaperone. Protects both thermally unfolding and oxidatively damaged proteins from irreversible aggregation. Plays an important role in the bacterial defense system toward oxidative stress.</text>
</comment>
<comment type="subcellular location">
    <subcellularLocation>
        <location evidence="1">Cytoplasm</location>
    </subcellularLocation>
</comment>
<comment type="PTM">
    <text evidence="1">Under oxidizing conditions two disulfide bonds are formed involving the reactive cysteines. Under reducing conditions zinc is bound to the reactive cysteines and the protein is inactive.</text>
</comment>
<comment type="similarity">
    <text evidence="1">Belongs to the HSP33 family.</text>
</comment>
<comment type="sequence caution" evidence="2">
    <conflict type="erroneous initiation">
        <sequence resource="EMBL-CDS" id="AAG58501"/>
    </conflict>
</comment>
<accession>P0A6Y7</accession>
<accession>P45803</accession>
<proteinExistence type="inferred from homology"/>